<reference key="1">
    <citation type="journal article" date="2004" name="Nucleic Acids Res.">
        <title>Thermoadaptation trait revealed by the genome sequence of thermophilic Geobacillus kaustophilus.</title>
        <authorList>
            <person name="Takami H."/>
            <person name="Takaki Y."/>
            <person name="Chee G.-J."/>
            <person name="Nishi S."/>
            <person name="Shimamura S."/>
            <person name="Suzuki H."/>
            <person name="Matsui S."/>
            <person name="Uchiyama I."/>
        </authorList>
    </citation>
    <scope>NUCLEOTIDE SEQUENCE [LARGE SCALE GENOMIC DNA]</scope>
    <source>
        <strain>HTA426</strain>
    </source>
</reference>
<proteinExistence type="inferred from homology"/>
<feature type="chain" id="PRO_0000162321" description="Small, acid-soluble spore protein H 1">
    <location>
        <begin position="1"/>
        <end position="60"/>
    </location>
</feature>
<feature type="region of interest" description="Disordered" evidence="2">
    <location>
        <begin position="39"/>
        <end position="60"/>
    </location>
</feature>
<sequence>MDVRRAQEIASSPVMANVTYNGQRIYIEHVDQQKGVATIHPLDNPNQKQSVPVASLEEHS</sequence>
<name>SSPH1_GEOKA</name>
<keyword id="KW-1185">Reference proteome</keyword>
<keyword id="KW-0749">Sporulation</keyword>
<gene>
    <name evidence="1" type="primary">sspH1</name>
    <name type="ordered locus">GK2129</name>
</gene>
<comment type="subcellular location">
    <subcellularLocation>
        <location evidence="1">Spore core</location>
    </subcellularLocation>
</comment>
<comment type="induction">
    <text evidence="1">Expressed only in the forespore compartment of sporulating cells.</text>
</comment>
<comment type="similarity">
    <text evidence="1">Belongs to the SspH family.</text>
</comment>
<accession>Q5KY22</accession>
<evidence type="ECO:0000255" key="1">
    <source>
        <dbReference type="HAMAP-Rule" id="MF_00667"/>
    </source>
</evidence>
<evidence type="ECO:0000256" key="2">
    <source>
        <dbReference type="SAM" id="MobiDB-lite"/>
    </source>
</evidence>
<dbReference type="EMBL" id="BA000043">
    <property type="protein sequence ID" value="BAD76414.1"/>
    <property type="molecule type" value="Genomic_DNA"/>
</dbReference>
<dbReference type="RefSeq" id="WP_011231614.1">
    <property type="nucleotide sequence ID" value="NC_006510.1"/>
</dbReference>
<dbReference type="SMR" id="Q5KY22"/>
<dbReference type="STRING" id="235909.GK2129"/>
<dbReference type="KEGG" id="gka:GK2129"/>
<dbReference type="eggNOG" id="ENOG50333NS">
    <property type="taxonomic scope" value="Bacteria"/>
</dbReference>
<dbReference type="HOGENOM" id="CLU_191960_2_1_9"/>
<dbReference type="Proteomes" id="UP000001172">
    <property type="component" value="Chromosome"/>
</dbReference>
<dbReference type="GO" id="GO:0042601">
    <property type="term" value="C:endospore-forming forespore"/>
    <property type="evidence" value="ECO:0007669"/>
    <property type="project" value="InterPro"/>
</dbReference>
<dbReference type="GO" id="GO:0030436">
    <property type="term" value="P:asexual sporulation"/>
    <property type="evidence" value="ECO:0007669"/>
    <property type="project" value="UniProtKB-UniRule"/>
</dbReference>
<dbReference type="GO" id="GO:0030435">
    <property type="term" value="P:sporulation resulting in formation of a cellular spore"/>
    <property type="evidence" value="ECO:0007669"/>
    <property type="project" value="UniProtKB-KW"/>
</dbReference>
<dbReference type="HAMAP" id="MF_00667">
    <property type="entry name" value="SspH"/>
    <property type="match status" value="1"/>
</dbReference>
<dbReference type="InterPro" id="IPR012610">
    <property type="entry name" value="SASP_SspH"/>
</dbReference>
<dbReference type="NCBIfam" id="NF002867">
    <property type="entry name" value="PRK03174.1"/>
    <property type="match status" value="1"/>
</dbReference>
<dbReference type="NCBIfam" id="TIGR02861">
    <property type="entry name" value="SASP_H"/>
    <property type="match status" value="1"/>
</dbReference>
<dbReference type="Pfam" id="PF08141">
    <property type="entry name" value="SspH"/>
    <property type="match status" value="1"/>
</dbReference>
<organism>
    <name type="scientific">Geobacillus kaustophilus (strain HTA426)</name>
    <dbReference type="NCBI Taxonomy" id="235909"/>
    <lineage>
        <taxon>Bacteria</taxon>
        <taxon>Bacillati</taxon>
        <taxon>Bacillota</taxon>
        <taxon>Bacilli</taxon>
        <taxon>Bacillales</taxon>
        <taxon>Anoxybacillaceae</taxon>
        <taxon>Geobacillus</taxon>
        <taxon>Geobacillus thermoleovorans group</taxon>
    </lineage>
</organism>
<protein>
    <recommendedName>
        <fullName evidence="1">Small, acid-soluble spore protein H 1</fullName>
        <shortName evidence="1">SASP H 1</shortName>
    </recommendedName>
</protein>